<accession>A1TWJ0</accession>
<keyword id="KW-0067">ATP-binding</keyword>
<keyword id="KW-0963">Cytoplasm</keyword>
<keyword id="KW-0235">DNA replication</keyword>
<keyword id="KW-0238">DNA-binding</keyword>
<keyword id="KW-0446">Lipid-binding</keyword>
<keyword id="KW-0547">Nucleotide-binding</keyword>
<dbReference type="EMBL" id="CP000514">
    <property type="protein sequence ID" value="ABM17109.1"/>
    <property type="molecule type" value="Genomic_DNA"/>
</dbReference>
<dbReference type="RefSeq" id="WP_011783582.1">
    <property type="nucleotide sequence ID" value="NC_008740.1"/>
</dbReference>
<dbReference type="SMR" id="A1TWJ0"/>
<dbReference type="STRING" id="351348.Maqu_0001"/>
<dbReference type="GeneID" id="31819540"/>
<dbReference type="KEGG" id="maq:Maqu_0001"/>
<dbReference type="eggNOG" id="COG0593">
    <property type="taxonomic scope" value="Bacteria"/>
</dbReference>
<dbReference type="HOGENOM" id="CLU_026910_0_1_6"/>
<dbReference type="OrthoDB" id="9807019at2"/>
<dbReference type="Proteomes" id="UP000000998">
    <property type="component" value="Chromosome"/>
</dbReference>
<dbReference type="GO" id="GO:0005737">
    <property type="term" value="C:cytoplasm"/>
    <property type="evidence" value="ECO:0007669"/>
    <property type="project" value="UniProtKB-SubCell"/>
</dbReference>
<dbReference type="GO" id="GO:0005886">
    <property type="term" value="C:plasma membrane"/>
    <property type="evidence" value="ECO:0007669"/>
    <property type="project" value="TreeGrafter"/>
</dbReference>
<dbReference type="GO" id="GO:0005524">
    <property type="term" value="F:ATP binding"/>
    <property type="evidence" value="ECO:0007669"/>
    <property type="project" value="UniProtKB-UniRule"/>
</dbReference>
<dbReference type="GO" id="GO:0016887">
    <property type="term" value="F:ATP hydrolysis activity"/>
    <property type="evidence" value="ECO:0007669"/>
    <property type="project" value="InterPro"/>
</dbReference>
<dbReference type="GO" id="GO:0003688">
    <property type="term" value="F:DNA replication origin binding"/>
    <property type="evidence" value="ECO:0007669"/>
    <property type="project" value="UniProtKB-UniRule"/>
</dbReference>
<dbReference type="GO" id="GO:0008289">
    <property type="term" value="F:lipid binding"/>
    <property type="evidence" value="ECO:0007669"/>
    <property type="project" value="UniProtKB-KW"/>
</dbReference>
<dbReference type="GO" id="GO:0006270">
    <property type="term" value="P:DNA replication initiation"/>
    <property type="evidence" value="ECO:0007669"/>
    <property type="project" value="UniProtKB-UniRule"/>
</dbReference>
<dbReference type="GO" id="GO:0006275">
    <property type="term" value="P:regulation of DNA replication"/>
    <property type="evidence" value="ECO:0007669"/>
    <property type="project" value="UniProtKB-UniRule"/>
</dbReference>
<dbReference type="CDD" id="cd00009">
    <property type="entry name" value="AAA"/>
    <property type="match status" value="1"/>
</dbReference>
<dbReference type="CDD" id="cd06571">
    <property type="entry name" value="Bac_DnaA_C"/>
    <property type="match status" value="1"/>
</dbReference>
<dbReference type="FunFam" id="1.10.1750.10:FF:000001">
    <property type="entry name" value="Chromosomal replication initiator protein DnaA"/>
    <property type="match status" value="1"/>
</dbReference>
<dbReference type="FunFam" id="1.10.8.60:FF:000003">
    <property type="entry name" value="Chromosomal replication initiator protein DnaA"/>
    <property type="match status" value="1"/>
</dbReference>
<dbReference type="FunFam" id="3.40.50.300:FF:000103">
    <property type="entry name" value="Chromosomal replication initiator protein DnaA"/>
    <property type="match status" value="1"/>
</dbReference>
<dbReference type="Gene3D" id="1.10.1750.10">
    <property type="match status" value="1"/>
</dbReference>
<dbReference type="Gene3D" id="1.10.8.60">
    <property type="match status" value="1"/>
</dbReference>
<dbReference type="Gene3D" id="3.30.300.180">
    <property type="match status" value="1"/>
</dbReference>
<dbReference type="Gene3D" id="3.40.50.300">
    <property type="entry name" value="P-loop containing nucleotide triphosphate hydrolases"/>
    <property type="match status" value="1"/>
</dbReference>
<dbReference type="HAMAP" id="MF_00377">
    <property type="entry name" value="DnaA_bact"/>
    <property type="match status" value="1"/>
</dbReference>
<dbReference type="InterPro" id="IPR003593">
    <property type="entry name" value="AAA+_ATPase"/>
</dbReference>
<dbReference type="InterPro" id="IPR001957">
    <property type="entry name" value="Chromosome_initiator_DnaA"/>
</dbReference>
<dbReference type="InterPro" id="IPR020591">
    <property type="entry name" value="Chromosome_initiator_DnaA-like"/>
</dbReference>
<dbReference type="InterPro" id="IPR018312">
    <property type="entry name" value="Chromosome_initiator_DnaA_CS"/>
</dbReference>
<dbReference type="InterPro" id="IPR013159">
    <property type="entry name" value="DnaA_C"/>
</dbReference>
<dbReference type="InterPro" id="IPR013317">
    <property type="entry name" value="DnaA_dom"/>
</dbReference>
<dbReference type="InterPro" id="IPR024633">
    <property type="entry name" value="DnaA_N_dom"/>
</dbReference>
<dbReference type="InterPro" id="IPR038454">
    <property type="entry name" value="DnaA_N_sf"/>
</dbReference>
<dbReference type="InterPro" id="IPR027417">
    <property type="entry name" value="P-loop_NTPase"/>
</dbReference>
<dbReference type="InterPro" id="IPR010921">
    <property type="entry name" value="Trp_repressor/repl_initiator"/>
</dbReference>
<dbReference type="NCBIfam" id="TIGR00362">
    <property type="entry name" value="DnaA"/>
    <property type="match status" value="1"/>
</dbReference>
<dbReference type="PANTHER" id="PTHR30050">
    <property type="entry name" value="CHROMOSOMAL REPLICATION INITIATOR PROTEIN DNAA"/>
    <property type="match status" value="1"/>
</dbReference>
<dbReference type="PANTHER" id="PTHR30050:SF2">
    <property type="entry name" value="CHROMOSOMAL REPLICATION INITIATOR PROTEIN DNAA"/>
    <property type="match status" value="1"/>
</dbReference>
<dbReference type="Pfam" id="PF00308">
    <property type="entry name" value="Bac_DnaA"/>
    <property type="match status" value="1"/>
</dbReference>
<dbReference type="Pfam" id="PF08299">
    <property type="entry name" value="Bac_DnaA_C"/>
    <property type="match status" value="1"/>
</dbReference>
<dbReference type="Pfam" id="PF11638">
    <property type="entry name" value="DnaA_N"/>
    <property type="match status" value="1"/>
</dbReference>
<dbReference type="PRINTS" id="PR00051">
    <property type="entry name" value="DNAA"/>
</dbReference>
<dbReference type="SMART" id="SM00382">
    <property type="entry name" value="AAA"/>
    <property type="match status" value="1"/>
</dbReference>
<dbReference type="SMART" id="SM00760">
    <property type="entry name" value="Bac_DnaA_C"/>
    <property type="match status" value="1"/>
</dbReference>
<dbReference type="SUPFAM" id="SSF52540">
    <property type="entry name" value="P-loop containing nucleoside triphosphate hydrolases"/>
    <property type="match status" value="1"/>
</dbReference>
<dbReference type="SUPFAM" id="SSF48295">
    <property type="entry name" value="TrpR-like"/>
    <property type="match status" value="1"/>
</dbReference>
<dbReference type="PROSITE" id="PS01008">
    <property type="entry name" value="DNAA"/>
    <property type="match status" value="1"/>
</dbReference>
<organism>
    <name type="scientific">Marinobacter nauticus (strain ATCC 700491 / DSM 11845 / VT8)</name>
    <name type="common">Marinobacter aquaeolei</name>
    <dbReference type="NCBI Taxonomy" id="351348"/>
    <lineage>
        <taxon>Bacteria</taxon>
        <taxon>Pseudomonadati</taxon>
        <taxon>Pseudomonadota</taxon>
        <taxon>Gammaproteobacteria</taxon>
        <taxon>Pseudomonadales</taxon>
        <taxon>Marinobacteraceae</taxon>
        <taxon>Marinobacter</taxon>
    </lineage>
</organism>
<reference key="1">
    <citation type="journal article" date="2011" name="Appl. Environ. Microbiol.">
        <title>Genomic potential of Marinobacter aquaeolei, a biogeochemical 'opportunitroph'.</title>
        <authorList>
            <person name="Singer E."/>
            <person name="Webb E.A."/>
            <person name="Nelson W.C."/>
            <person name="Heidelberg J.F."/>
            <person name="Ivanova N."/>
            <person name="Pati A."/>
            <person name="Edwards K.J."/>
        </authorList>
    </citation>
    <scope>NUCLEOTIDE SEQUENCE [LARGE SCALE GENOMIC DNA]</scope>
    <source>
        <strain>ATCC 700491 / DSM 11845 / VT8</strain>
    </source>
</reference>
<gene>
    <name evidence="1" type="primary">dnaA</name>
    <name type="ordered locus">Maqu_0001</name>
</gene>
<feature type="chain" id="PRO_1000048669" description="Chromosomal replication initiator protein DnaA">
    <location>
        <begin position="1"/>
        <end position="487"/>
    </location>
</feature>
<feature type="region of interest" description="Domain I, interacts with DnaA modulators" evidence="1">
    <location>
        <begin position="1"/>
        <end position="79"/>
    </location>
</feature>
<feature type="region of interest" description="Disordered" evidence="2">
    <location>
        <begin position="78"/>
        <end position="138"/>
    </location>
</feature>
<feature type="region of interest" description="Domain II" evidence="1">
    <location>
        <begin position="79"/>
        <end position="150"/>
    </location>
</feature>
<feature type="region of interest" description="Domain III, AAA+ region" evidence="1">
    <location>
        <begin position="151"/>
        <end position="367"/>
    </location>
</feature>
<feature type="region of interest" description="Domain IV, binds dsDNA" evidence="1">
    <location>
        <begin position="368"/>
        <end position="487"/>
    </location>
</feature>
<feature type="binding site" evidence="1">
    <location>
        <position position="195"/>
    </location>
    <ligand>
        <name>ATP</name>
        <dbReference type="ChEBI" id="CHEBI:30616"/>
    </ligand>
</feature>
<feature type="binding site" evidence="1">
    <location>
        <position position="197"/>
    </location>
    <ligand>
        <name>ATP</name>
        <dbReference type="ChEBI" id="CHEBI:30616"/>
    </ligand>
</feature>
<feature type="binding site" evidence="1">
    <location>
        <position position="198"/>
    </location>
    <ligand>
        <name>ATP</name>
        <dbReference type="ChEBI" id="CHEBI:30616"/>
    </ligand>
</feature>
<feature type="binding site" evidence="1">
    <location>
        <position position="199"/>
    </location>
    <ligand>
        <name>ATP</name>
        <dbReference type="ChEBI" id="CHEBI:30616"/>
    </ligand>
</feature>
<sequence>MPNSMWHQCLEVLRDEFPAQQFNTWLRPLQSDHREGQLMLFAPNRFVMDWVNEKYLRRIEEVLKDLNGGQAPRVMMKVGSAPKPTDPVVRSEVAPPVRVSEETEQTVTEEERSVAATVADSAPRAMSAPAPKAQAERRPVQVEGDIKHQSFLNETFTFDTFVEGKSNQLARAASMQVAENPGGAYNPLFLYGGVGLGKTHLMHAIGNEIVRRNPRAKVAYLRSERFVADMVKALQLNAINEFKRYYRSVDALLIDDIQFFARKERSQEEFFHTFNALLEGGQQVIVTCDRFPKEISDMEERLKSRFGWGLTVMVEPPELETRVAILMKKAEQANVKLSSEAAFFIAQKIRSNVRELEGALRLVIANAHFTGSEITPPFIRESLKDLLALHEKQVSIDNIQRTVAEYYKIKVADLLSKRRTRTVTRPRQVAMSLAKELTNHSLPEIGDAFGGRDHTTVLHACKKIVELQETDPGIREDYQNFMRLLTT</sequence>
<comment type="function">
    <text evidence="1">Plays an essential role in the initiation and regulation of chromosomal replication. ATP-DnaA binds to the origin of replication (oriC) to initiate formation of the DNA replication initiation complex once per cell cycle. Binds the DnaA box (a 9 base pair repeat at the origin) and separates the double-stranded (ds)DNA. Forms a right-handed helical filament on oriC DNA; dsDNA binds to the exterior of the filament while single-stranded (ss)DNA is stabiized in the filament's interior. The ATP-DnaA-oriC complex binds and stabilizes one strand of the AT-rich DNA unwinding element (DUE), permitting loading of DNA polymerase. After initiation quickly degrades to an ADP-DnaA complex that is not apt for DNA replication. Binds acidic phospholipids.</text>
</comment>
<comment type="subunit">
    <text evidence="1">Oligomerizes as a right-handed, spiral filament on DNA at oriC.</text>
</comment>
<comment type="subcellular location">
    <subcellularLocation>
        <location evidence="1">Cytoplasm</location>
    </subcellularLocation>
</comment>
<comment type="domain">
    <text evidence="1">Domain I is involved in oligomerization and binding regulators, domain II is flexibile and of varying length in different bacteria, domain III forms the AAA+ region, while domain IV binds dsDNA.</text>
</comment>
<comment type="similarity">
    <text evidence="1">Belongs to the DnaA family.</text>
</comment>
<proteinExistence type="inferred from homology"/>
<protein>
    <recommendedName>
        <fullName evidence="1">Chromosomal replication initiator protein DnaA</fullName>
    </recommendedName>
</protein>
<evidence type="ECO:0000255" key="1">
    <source>
        <dbReference type="HAMAP-Rule" id="MF_00377"/>
    </source>
</evidence>
<evidence type="ECO:0000256" key="2">
    <source>
        <dbReference type="SAM" id="MobiDB-lite"/>
    </source>
</evidence>
<name>DNAA_MARN8</name>